<dbReference type="EC" id="2.4.1.21" evidence="1"/>
<dbReference type="EMBL" id="CP000034">
    <property type="protein sequence ID" value="ABB63549.1"/>
    <property type="molecule type" value="Genomic_DNA"/>
</dbReference>
<dbReference type="RefSeq" id="WP_001197650.1">
    <property type="nucleotide sequence ID" value="NC_007606.1"/>
</dbReference>
<dbReference type="RefSeq" id="YP_405040.1">
    <property type="nucleotide sequence ID" value="NC_007606.1"/>
</dbReference>
<dbReference type="SMR" id="Q32AV6"/>
<dbReference type="STRING" id="300267.SDY_3575"/>
<dbReference type="CAZy" id="GT5">
    <property type="family name" value="Glycosyltransferase Family 5"/>
</dbReference>
<dbReference type="EnsemblBacteria" id="ABB63549">
    <property type="protein sequence ID" value="ABB63549"/>
    <property type="gene ID" value="SDY_3575"/>
</dbReference>
<dbReference type="KEGG" id="sdy:SDY_3575"/>
<dbReference type="PATRIC" id="fig|300267.13.peg.4246"/>
<dbReference type="HOGENOM" id="CLU_009583_18_2_6"/>
<dbReference type="UniPathway" id="UPA00164"/>
<dbReference type="Proteomes" id="UP000002716">
    <property type="component" value="Chromosome"/>
</dbReference>
<dbReference type="GO" id="GO:0005829">
    <property type="term" value="C:cytosol"/>
    <property type="evidence" value="ECO:0007669"/>
    <property type="project" value="TreeGrafter"/>
</dbReference>
<dbReference type="GO" id="GO:0009011">
    <property type="term" value="F:alpha-1,4-glucan glucosyltransferase (ADP-glucose donor) activity"/>
    <property type="evidence" value="ECO:0007669"/>
    <property type="project" value="UniProtKB-UniRule"/>
</dbReference>
<dbReference type="GO" id="GO:0004373">
    <property type="term" value="F:alpha-1,4-glucan glucosyltransferase (UDP-glucose donor) activity"/>
    <property type="evidence" value="ECO:0007669"/>
    <property type="project" value="InterPro"/>
</dbReference>
<dbReference type="GO" id="GO:0005978">
    <property type="term" value="P:glycogen biosynthetic process"/>
    <property type="evidence" value="ECO:0007669"/>
    <property type="project" value="UniProtKB-UniRule"/>
</dbReference>
<dbReference type="CDD" id="cd03791">
    <property type="entry name" value="GT5_Glycogen_synthase_DULL1-like"/>
    <property type="match status" value="1"/>
</dbReference>
<dbReference type="FunFam" id="3.40.50.2000:FF:000008">
    <property type="entry name" value="Glycogen synthase"/>
    <property type="match status" value="1"/>
</dbReference>
<dbReference type="FunFam" id="3.40.50.2000:FF:000011">
    <property type="entry name" value="Glycogen synthase"/>
    <property type="match status" value="1"/>
</dbReference>
<dbReference type="Gene3D" id="3.40.50.2000">
    <property type="entry name" value="Glycogen Phosphorylase B"/>
    <property type="match status" value="2"/>
</dbReference>
<dbReference type="HAMAP" id="MF_00484">
    <property type="entry name" value="Glycogen_synth"/>
    <property type="match status" value="1"/>
</dbReference>
<dbReference type="InterPro" id="IPR001296">
    <property type="entry name" value="Glyco_trans_1"/>
</dbReference>
<dbReference type="InterPro" id="IPR011835">
    <property type="entry name" value="GS/SS"/>
</dbReference>
<dbReference type="InterPro" id="IPR013534">
    <property type="entry name" value="Starch_synth_cat_dom"/>
</dbReference>
<dbReference type="NCBIfam" id="TIGR02095">
    <property type="entry name" value="glgA"/>
    <property type="match status" value="1"/>
</dbReference>
<dbReference type="NCBIfam" id="NF001899">
    <property type="entry name" value="PRK00654.1-2"/>
    <property type="match status" value="1"/>
</dbReference>
<dbReference type="PANTHER" id="PTHR45825:SF11">
    <property type="entry name" value="ALPHA AMYLASE DOMAIN-CONTAINING PROTEIN"/>
    <property type="match status" value="1"/>
</dbReference>
<dbReference type="PANTHER" id="PTHR45825">
    <property type="entry name" value="GRANULE-BOUND STARCH SYNTHASE 1, CHLOROPLASTIC/AMYLOPLASTIC"/>
    <property type="match status" value="1"/>
</dbReference>
<dbReference type="Pfam" id="PF08323">
    <property type="entry name" value="Glyco_transf_5"/>
    <property type="match status" value="1"/>
</dbReference>
<dbReference type="Pfam" id="PF00534">
    <property type="entry name" value="Glycos_transf_1"/>
    <property type="match status" value="1"/>
</dbReference>
<dbReference type="SUPFAM" id="SSF53756">
    <property type="entry name" value="UDP-Glycosyltransferase/glycogen phosphorylase"/>
    <property type="match status" value="1"/>
</dbReference>
<organism>
    <name type="scientific">Shigella dysenteriae serotype 1 (strain Sd197)</name>
    <dbReference type="NCBI Taxonomy" id="300267"/>
    <lineage>
        <taxon>Bacteria</taxon>
        <taxon>Pseudomonadati</taxon>
        <taxon>Pseudomonadota</taxon>
        <taxon>Gammaproteobacteria</taxon>
        <taxon>Enterobacterales</taxon>
        <taxon>Enterobacteriaceae</taxon>
        <taxon>Shigella</taxon>
    </lineage>
</organism>
<accession>Q32AV6</accession>
<feature type="chain" id="PRO_0000230264" description="Glycogen synthase">
    <location>
        <begin position="1"/>
        <end position="477"/>
    </location>
</feature>
<feature type="binding site" evidence="1">
    <location>
        <position position="15"/>
    </location>
    <ligand>
        <name>ADP-alpha-D-glucose</name>
        <dbReference type="ChEBI" id="CHEBI:57498"/>
    </ligand>
</feature>
<proteinExistence type="inferred from homology"/>
<name>GLGA_SHIDS</name>
<protein>
    <recommendedName>
        <fullName evidence="1">Glycogen synthase</fullName>
        <ecNumber evidence="1">2.4.1.21</ecNumber>
    </recommendedName>
    <alternativeName>
        <fullName evidence="1">Starch [bacterial glycogen] synthase</fullName>
    </alternativeName>
</protein>
<comment type="function">
    <text evidence="1">Synthesizes alpha-1,4-glucan chains using ADP-glucose.</text>
</comment>
<comment type="catalytic activity">
    <reaction evidence="1">
        <text>[(1-&gt;4)-alpha-D-glucosyl](n) + ADP-alpha-D-glucose = [(1-&gt;4)-alpha-D-glucosyl](n+1) + ADP + H(+)</text>
        <dbReference type="Rhea" id="RHEA:18189"/>
        <dbReference type="Rhea" id="RHEA-COMP:9584"/>
        <dbReference type="Rhea" id="RHEA-COMP:9587"/>
        <dbReference type="ChEBI" id="CHEBI:15378"/>
        <dbReference type="ChEBI" id="CHEBI:15444"/>
        <dbReference type="ChEBI" id="CHEBI:57498"/>
        <dbReference type="ChEBI" id="CHEBI:456216"/>
        <dbReference type="EC" id="2.4.1.21"/>
    </reaction>
</comment>
<comment type="pathway">
    <text evidence="1">Glycan biosynthesis; glycogen biosynthesis.</text>
</comment>
<comment type="similarity">
    <text evidence="1">Belongs to the glycosyltransferase 1 family. Bacterial/plant glycogen synthase subfamily.</text>
</comment>
<sequence length="477" mass="52821">MQVLHVCSEMFPLLKTGGLADVIGALPAAQIADGVDARVLLPAFPDIRRGVTDAQVVSRRDTFAGHITLLFGHYNGVGIYLIDAPHLYDRPGSPYHDTNLFAYTDNVLRFALLGWVGAEMASGLDPFWRPDVVHAHDWHAGLAPAYLAARGRPAKSVFTVHNLAYQGMFYAHHMNDIQLPWSFFNIHGLEFNGQISFLKAGLYYADHITAVSPTYAREITEPQFAYGMEGLLQQRHREGRLSGVLNGVDEKIWSPETDLLLASRYTRDTLEDKAKNKRQLQIAMGLKVDDKVPLFAVVSRLTSQKGLDLVLEALPGLLEQGGQLALLGAGDPVLQEGFLAAAAEYPGQVGVQIGYHEAFSHRIMGGADVILVPSRFEPCGLTQLYGLKYGTLPLVRRTGGLADTVSDCSLENLADGVASGFVFEDSNAWSLLRAIRRAFVLWSRPSLWRFVQRQAMAMDFSWQVAAKSYRELYYRLK</sequence>
<reference key="1">
    <citation type="journal article" date="2005" name="Nucleic Acids Res.">
        <title>Genome dynamics and diversity of Shigella species, the etiologic agents of bacillary dysentery.</title>
        <authorList>
            <person name="Yang F."/>
            <person name="Yang J."/>
            <person name="Zhang X."/>
            <person name="Chen L."/>
            <person name="Jiang Y."/>
            <person name="Yan Y."/>
            <person name="Tang X."/>
            <person name="Wang J."/>
            <person name="Xiong Z."/>
            <person name="Dong J."/>
            <person name="Xue Y."/>
            <person name="Zhu Y."/>
            <person name="Xu X."/>
            <person name="Sun L."/>
            <person name="Chen S."/>
            <person name="Nie H."/>
            <person name="Peng J."/>
            <person name="Xu J."/>
            <person name="Wang Y."/>
            <person name="Yuan Z."/>
            <person name="Wen Y."/>
            <person name="Yao Z."/>
            <person name="Shen Y."/>
            <person name="Qiang B."/>
            <person name="Hou Y."/>
            <person name="Yu J."/>
            <person name="Jin Q."/>
        </authorList>
    </citation>
    <scope>NUCLEOTIDE SEQUENCE [LARGE SCALE GENOMIC DNA]</scope>
    <source>
        <strain>Sd197</strain>
    </source>
</reference>
<keyword id="KW-0320">Glycogen biosynthesis</keyword>
<keyword id="KW-0328">Glycosyltransferase</keyword>
<keyword id="KW-1185">Reference proteome</keyword>
<keyword id="KW-0808">Transferase</keyword>
<evidence type="ECO:0000255" key="1">
    <source>
        <dbReference type="HAMAP-Rule" id="MF_00484"/>
    </source>
</evidence>
<gene>
    <name evidence="1" type="primary">glgA</name>
    <name type="ordered locus">SDY_3575</name>
</gene>